<proteinExistence type="evidence at protein level"/>
<sequence>MPEEESIDIKFRLYDGSDIGPFRYSAASTVDFLKQRVVSDWPKGKTVVPKGINEVKLISSGKILENNKTVGQCKTPFGDIAGGVIVMHVVVQPSLAKSKTEKKVDKAPKAVICTCTIL</sequence>
<name>MUB3_ARATH</name>
<reference key="1">
    <citation type="submission" date="1996-07" db="EMBL/GenBank/DDBJ databases">
        <title>A collection of cDNAs encoding isoprenylated plant proteins.</title>
        <authorList>
            <person name="Biermann B.J."/>
            <person name="Price J.R."/>
            <person name="Crowell D.N."/>
            <person name="Randall S.K."/>
        </authorList>
    </citation>
    <scope>NUCLEOTIDE SEQUENCE [MRNA]</scope>
</reference>
<reference key="2">
    <citation type="journal article" date="1999" name="Nature">
        <title>Sequence and analysis of chromosome 4 of the plant Arabidopsis thaliana.</title>
        <authorList>
            <person name="Mayer K.F.X."/>
            <person name="Schueller C."/>
            <person name="Wambutt R."/>
            <person name="Murphy G."/>
            <person name="Volckaert G."/>
            <person name="Pohl T."/>
            <person name="Duesterhoeft A."/>
            <person name="Stiekema W."/>
            <person name="Entian K.-D."/>
            <person name="Terryn N."/>
            <person name="Harris B."/>
            <person name="Ansorge W."/>
            <person name="Brandt P."/>
            <person name="Grivell L.A."/>
            <person name="Rieger M."/>
            <person name="Weichselgartner M."/>
            <person name="de Simone V."/>
            <person name="Obermaier B."/>
            <person name="Mache R."/>
            <person name="Mueller M."/>
            <person name="Kreis M."/>
            <person name="Delseny M."/>
            <person name="Puigdomenech P."/>
            <person name="Watson M."/>
            <person name="Schmidtheini T."/>
            <person name="Reichert B."/>
            <person name="Portetelle D."/>
            <person name="Perez-Alonso M."/>
            <person name="Boutry M."/>
            <person name="Bancroft I."/>
            <person name="Vos P."/>
            <person name="Hoheisel J."/>
            <person name="Zimmermann W."/>
            <person name="Wedler H."/>
            <person name="Ridley P."/>
            <person name="Langham S.-A."/>
            <person name="McCullagh B."/>
            <person name="Bilham L."/>
            <person name="Robben J."/>
            <person name="van der Schueren J."/>
            <person name="Grymonprez B."/>
            <person name="Chuang Y.-J."/>
            <person name="Vandenbussche F."/>
            <person name="Braeken M."/>
            <person name="Weltjens I."/>
            <person name="Voet M."/>
            <person name="Bastiaens I."/>
            <person name="Aert R."/>
            <person name="Defoor E."/>
            <person name="Weitzenegger T."/>
            <person name="Bothe G."/>
            <person name="Ramsperger U."/>
            <person name="Hilbert H."/>
            <person name="Braun M."/>
            <person name="Holzer E."/>
            <person name="Brandt A."/>
            <person name="Peters S."/>
            <person name="van Staveren M."/>
            <person name="Dirkse W."/>
            <person name="Mooijman P."/>
            <person name="Klein Lankhorst R."/>
            <person name="Rose M."/>
            <person name="Hauf J."/>
            <person name="Koetter P."/>
            <person name="Berneiser S."/>
            <person name="Hempel S."/>
            <person name="Feldpausch M."/>
            <person name="Lamberth S."/>
            <person name="Van den Daele H."/>
            <person name="De Keyser A."/>
            <person name="Buysshaert C."/>
            <person name="Gielen J."/>
            <person name="Villarroel R."/>
            <person name="De Clercq R."/>
            <person name="van Montagu M."/>
            <person name="Rogers J."/>
            <person name="Cronin A."/>
            <person name="Quail M.A."/>
            <person name="Bray-Allen S."/>
            <person name="Clark L."/>
            <person name="Doggett J."/>
            <person name="Hall S."/>
            <person name="Kay M."/>
            <person name="Lennard N."/>
            <person name="McLay K."/>
            <person name="Mayes R."/>
            <person name="Pettett A."/>
            <person name="Rajandream M.A."/>
            <person name="Lyne M."/>
            <person name="Benes V."/>
            <person name="Rechmann S."/>
            <person name="Borkova D."/>
            <person name="Bloecker H."/>
            <person name="Scharfe M."/>
            <person name="Grimm M."/>
            <person name="Loehnert T.-H."/>
            <person name="Dose S."/>
            <person name="de Haan M."/>
            <person name="Maarse A.C."/>
            <person name="Schaefer M."/>
            <person name="Mueller-Auer S."/>
            <person name="Gabel C."/>
            <person name="Fuchs M."/>
            <person name="Fartmann B."/>
            <person name="Granderath K."/>
            <person name="Dauner D."/>
            <person name="Herzl A."/>
            <person name="Neumann S."/>
            <person name="Argiriou A."/>
            <person name="Vitale D."/>
            <person name="Liguori R."/>
            <person name="Piravandi E."/>
            <person name="Massenet O."/>
            <person name="Quigley F."/>
            <person name="Clabauld G."/>
            <person name="Muendlein A."/>
            <person name="Felber R."/>
            <person name="Schnabl S."/>
            <person name="Hiller R."/>
            <person name="Schmidt W."/>
            <person name="Lecharny A."/>
            <person name="Aubourg S."/>
            <person name="Chefdor F."/>
            <person name="Cooke R."/>
            <person name="Berger C."/>
            <person name="Monfort A."/>
            <person name="Casacuberta E."/>
            <person name="Gibbons T."/>
            <person name="Weber N."/>
            <person name="Vandenbol M."/>
            <person name="Bargues M."/>
            <person name="Terol J."/>
            <person name="Torres A."/>
            <person name="Perez-Perez A."/>
            <person name="Purnelle B."/>
            <person name="Bent E."/>
            <person name="Johnson S."/>
            <person name="Tacon D."/>
            <person name="Jesse T."/>
            <person name="Heijnen L."/>
            <person name="Schwarz S."/>
            <person name="Scholler P."/>
            <person name="Heber S."/>
            <person name="Francs P."/>
            <person name="Bielke C."/>
            <person name="Frishman D."/>
            <person name="Haase D."/>
            <person name="Lemcke K."/>
            <person name="Mewes H.-W."/>
            <person name="Stocker S."/>
            <person name="Zaccaria P."/>
            <person name="Bevan M."/>
            <person name="Wilson R.K."/>
            <person name="de la Bastide M."/>
            <person name="Habermann K."/>
            <person name="Parnell L."/>
            <person name="Dedhia N."/>
            <person name="Gnoj L."/>
            <person name="Schutz K."/>
            <person name="Huang E."/>
            <person name="Spiegel L."/>
            <person name="Sekhon M."/>
            <person name="Murray J."/>
            <person name="Sheet P."/>
            <person name="Cordes M."/>
            <person name="Abu-Threideh J."/>
            <person name="Stoneking T."/>
            <person name="Kalicki J."/>
            <person name="Graves T."/>
            <person name="Harmon G."/>
            <person name="Edwards J."/>
            <person name="Latreille P."/>
            <person name="Courtney L."/>
            <person name="Cloud J."/>
            <person name="Abbott A."/>
            <person name="Scott K."/>
            <person name="Johnson D."/>
            <person name="Minx P."/>
            <person name="Bentley D."/>
            <person name="Fulton B."/>
            <person name="Miller N."/>
            <person name="Greco T."/>
            <person name="Kemp K."/>
            <person name="Kramer J."/>
            <person name="Fulton L."/>
            <person name="Mardis E."/>
            <person name="Dante M."/>
            <person name="Pepin K."/>
            <person name="Hillier L.W."/>
            <person name="Nelson J."/>
            <person name="Spieth J."/>
            <person name="Ryan E."/>
            <person name="Andrews S."/>
            <person name="Geisel C."/>
            <person name="Layman D."/>
            <person name="Du H."/>
            <person name="Ali J."/>
            <person name="Berghoff A."/>
            <person name="Jones K."/>
            <person name="Drone K."/>
            <person name="Cotton M."/>
            <person name="Joshu C."/>
            <person name="Antonoiu B."/>
            <person name="Zidanic M."/>
            <person name="Strong C."/>
            <person name="Sun H."/>
            <person name="Lamar B."/>
            <person name="Yordan C."/>
            <person name="Ma P."/>
            <person name="Zhong J."/>
            <person name="Preston R."/>
            <person name="Vil D."/>
            <person name="Shekher M."/>
            <person name="Matero A."/>
            <person name="Shah R."/>
            <person name="Swaby I.K."/>
            <person name="O'Shaughnessy A."/>
            <person name="Rodriguez M."/>
            <person name="Hoffman J."/>
            <person name="Till S."/>
            <person name="Granat S."/>
            <person name="Shohdy N."/>
            <person name="Hasegawa A."/>
            <person name="Hameed A."/>
            <person name="Lodhi M."/>
            <person name="Johnson A."/>
            <person name="Chen E."/>
            <person name="Marra M.A."/>
            <person name="Martienssen R."/>
            <person name="McCombie W.R."/>
        </authorList>
    </citation>
    <scope>NUCLEOTIDE SEQUENCE [LARGE SCALE GENOMIC DNA]</scope>
    <source>
        <strain>cv. Columbia</strain>
    </source>
</reference>
<reference key="3">
    <citation type="journal article" date="2017" name="Plant J.">
        <title>Araport11: a complete reannotation of the Arabidopsis thaliana reference genome.</title>
        <authorList>
            <person name="Cheng C.Y."/>
            <person name="Krishnakumar V."/>
            <person name="Chan A.P."/>
            <person name="Thibaud-Nissen F."/>
            <person name="Schobel S."/>
            <person name="Town C.D."/>
        </authorList>
    </citation>
    <scope>GENOME REANNOTATION</scope>
    <source>
        <strain>cv. Columbia</strain>
    </source>
</reference>
<reference key="4">
    <citation type="journal article" date="2003" name="Science">
        <title>Empirical analysis of transcriptional activity in the Arabidopsis genome.</title>
        <authorList>
            <person name="Yamada K."/>
            <person name="Lim J."/>
            <person name="Dale J.M."/>
            <person name="Chen H."/>
            <person name="Shinn P."/>
            <person name="Palm C.J."/>
            <person name="Southwick A.M."/>
            <person name="Wu H.C."/>
            <person name="Kim C.J."/>
            <person name="Nguyen M."/>
            <person name="Pham P.K."/>
            <person name="Cheuk R.F."/>
            <person name="Karlin-Newmann G."/>
            <person name="Liu S.X."/>
            <person name="Lam B."/>
            <person name="Sakano H."/>
            <person name="Wu T."/>
            <person name="Yu G."/>
            <person name="Miranda M."/>
            <person name="Quach H.L."/>
            <person name="Tripp M."/>
            <person name="Chang C.H."/>
            <person name="Lee J.M."/>
            <person name="Toriumi M.J."/>
            <person name="Chan M.M."/>
            <person name="Tang C.C."/>
            <person name="Onodera C.S."/>
            <person name="Deng J.M."/>
            <person name="Akiyama K."/>
            <person name="Ansari Y."/>
            <person name="Arakawa T."/>
            <person name="Banh J."/>
            <person name="Banno F."/>
            <person name="Bowser L."/>
            <person name="Brooks S.Y."/>
            <person name="Carninci P."/>
            <person name="Chao Q."/>
            <person name="Choy N."/>
            <person name="Enju A."/>
            <person name="Goldsmith A.D."/>
            <person name="Gurjal M."/>
            <person name="Hansen N.F."/>
            <person name="Hayashizaki Y."/>
            <person name="Johnson-Hopson C."/>
            <person name="Hsuan V.W."/>
            <person name="Iida K."/>
            <person name="Karnes M."/>
            <person name="Khan S."/>
            <person name="Koesema E."/>
            <person name="Ishida J."/>
            <person name="Jiang P.X."/>
            <person name="Jones T."/>
            <person name="Kawai J."/>
            <person name="Kamiya A."/>
            <person name="Meyers C."/>
            <person name="Nakajima M."/>
            <person name="Narusaka M."/>
            <person name="Seki M."/>
            <person name="Sakurai T."/>
            <person name="Satou M."/>
            <person name="Tamse R."/>
            <person name="Vaysberg M."/>
            <person name="Wallender E.K."/>
            <person name="Wong C."/>
            <person name="Yamamura Y."/>
            <person name="Yuan S."/>
            <person name="Shinozaki K."/>
            <person name="Davis R.W."/>
            <person name="Theologis A."/>
            <person name="Ecker J.R."/>
        </authorList>
    </citation>
    <scope>NUCLEOTIDE SEQUENCE [LARGE SCALE MRNA]</scope>
    <source>
        <strain>cv. Columbia</strain>
    </source>
</reference>
<reference key="5">
    <citation type="submission" date="2006-07" db="EMBL/GenBank/DDBJ databases">
        <title>Large-scale analysis of RIKEN Arabidopsis full-length (RAFL) cDNAs.</title>
        <authorList>
            <person name="Totoki Y."/>
            <person name="Seki M."/>
            <person name="Ishida J."/>
            <person name="Nakajima M."/>
            <person name="Enju A."/>
            <person name="Kamiya A."/>
            <person name="Narusaka M."/>
            <person name="Shin-i T."/>
            <person name="Nakagawa M."/>
            <person name="Sakamoto N."/>
            <person name="Oishi K."/>
            <person name="Kohara Y."/>
            <person name="Kobayashi M."/>
            <person name="Toyoda A."/>
            <person name="Sakaki Y."/>
            <person name="Sakurai T."/>
            <person name="Iida K."/>
            <person name="Akiyama K."/>
            <person name="Satou M."/>
            <person name="Toyoda T."/>
            <person name="Konagaya A."/>
            <person name="Carninci P."/>
            <person name="Kawai J."/>
            <person name="Hayashizaki Y."/>
            <person name="Shinozaki K."/>
        </authorList>
    </citation>
    <scope>NUCLEOTIDE SEQUENCE [LARGE SCALE MRNA]</scope>
    <source>
        <strain>cv. Columbia</strain>
    </source>
</reference>
<reference key="6">
    <citation type="journal article" date="2006" name="J. Biol. Chem.">
        <title>MUBS: a family of ubiquitin-fold proteins that are plasma membrane-anchored by prenylation.</title>
        <authorList>
            <person name="Downes B.P."/>
            <person name="Saracco S.A."/>
            <person name="Lee S.S."/>
            <person name="Crowell D.N."/>
            <person name="Vierstra R.D."/>
        </authorList>
    </citation>
    <scope>IDENTIFICATION</scope>
    <scope>NOMENCLATURE</scope>
    <scope>ISOPRENYLATION AT CYS-115</scope>
    <scope>METHYLATION AT CYS-115</scope>
    <scope>MUTAGENESIS OF CYS-115</scope>
    <scope>TISSUE SPECIFICITY</scope>
    <scope>INDUCTION</scope>
    <scope>SUBCELLULAR LOCATION</scope>
</reference>
<keyword id="KW-0002">3D-structure</keyword>
<keyword id="KW-1003">Cell membrane</keyword>
<keyword id="KW-0449">Lipoprotein</keyword>
<keyword id="KW-0472">Membrane</keyword>
<keyword id="KW-0488">Methylation</keyword>
<keyword id="KW-0564">Palmitate</keyword>
<keyword id="KW-0636">Prenylation</keyword>
<keyword id="KW-1185">Reference proteome</keyword>
<evidence type="ECO:0000255" key="1"/>
<evidence type="ECO:0000255" key="2">
    <source>
        <dbReference type="PROSITE-ProRule" id="PRU00214"/>
    </source>
</evidence>
<evidence type="ECO:0000269" key="3">
    <source>
    </source>
</evidence>
<evidence type="ECO:0000305" key="4"/>
<evidence type="ECO:0007829" key="5">
    <source>
        <dbReference type="PDB" id="4X57"/>
    </source>
</evidence>
<comment type="function">
    <text>May serve as docking site to facilitate the association of other proteins to the plasma membrane.</text>
</comment>
<comment type="subcellular location">
    <subcellularLocation>
        <location evidence="3">Cell membrane</location>
        <topology evidence="3">Lipid-anchor</topology>
    </subcellularLocation>
</comment>
<comment type="tissue specificity">
    <text evidence="3">Ubiquitous, but three fold higher expression in senescing leaves.</text>
</comment>
<comment type="induction">
    <text evidence="3">Not induced by pathogens, cycloheximide and ozone treatment.</text>
</comment>
<comment type="miscellaneous">
    <text>Heat stable and remains soluble at temperatures exceeding 90 degrees Celsius.</text>
</comment>
<feature type="chain" id="PRO_0000248165" description="Membrane-anchored ubiquitin-fold protein 3">
    <location>
        <begin position="1"/>
        <end position="115"/>
    </location>
</feature>
<feature type="propeptide" id="PRO_0000248166" description="Removed in mature form">
    <location>
        <begin position="116"/>
        <end position="118"/>
    </location>
</feature>
<feature type="domain" description="Ubiquitin-like" evidence="2">
    <location>
        <begin position="7"/>
        <end position="73"/>
    </location>
</feature>
<feature type="modified residue" description="Cysteine methyl ester" evidence="3">
    <location>
        <position position="115"/>
    </location>
</feature>
<feature type="lipid moiety-binding region" description="S-palmitoyl cysteine" evidence="1">
    <location>
        <position position="113"/>
    </location>
</feature>
<feature type="lipid moiety-binding region" description="S-geranylgeranyl cysteine" evidence="3">
    <location>
        <position position="115"/>
    </location>
</feature>
<feature type="mutagenesis site" description="Loss of prenylation and membrane localization." evidence="3">
    <original>C</original>
    <variation>S</variation>
    <location>
        <position position="115"/>
    </location>
</feature>
<feature type="sequence conflict" description="In Ref. 1; AAD00115." evidence="4" ref="1">
    <original>S</original>
    <variation>T</variation>
    <location>
        <position position="59"/>
    </location>
</feature>
<feature type="strand" evidence="5">
    <location>
        <begin position="6"/>
        <end position="12"/>
    </location>
</feature>
<feature type="strand" evidence="5">
    <location>
        <begin position="18"/>
        <end position="25"/>
    </location>
</feature>
<feature type="helix" evidence="5">
    <location>
        <begin position="30"/>
        <end position="40"/>
    </location>
</feature>
<feature type="helix" evidence="5">
    <location>
        <begin position="52"/>
        <end position="54"/>
    </location>
</feature>
<feature type="strand" evidence="5">
    <location>
        <begin position="55"/>
        <end position="59"/>
    </location>
</feature>
<feature type="strand" evidence="5">
    <location>
        <begin position="62"/>
        <end position="64"/>
    </location>
</feature>
<feature type="helix" evidence="5">
    <location>
        <begin position="70"/>
        <end position="72"/>
    </location>
</feature>
<feature type="turn" evidence="5">
    <location>
        <begin position="76"/>
        <end position="81"/>
    </location>
</feature>
<feature type="strand" evidence="5">
    <location>
        <begin position="85"/>
        <end position="91"/>
    </location>
</feature>
<organism>
    <name type="scientific">Arabidopsis thaliana</name>
    <name type="common">Mouse-ear cress</name>
    <dbReference type="NCBI Taxonomy" id="3702"/>
    <lineage>
        <taxon>Eukaryota</taxon>
        <taxon>Viridiplantae</taxon>
        <taxon>Streptophyta</taxon>
        <taxon>Embryophyta</taxon>
        <taxon>Tracheophyta</taxon>
        <taxon>Spermatophyta</taxon>
        <taxon>Magnoliopsida</taxon>
        <taxon>eudicotyledons</taxon>
        <taxon>Gunneridae</taxon>
        <taxon>Pentapetalae</taxon>
        <taxon>rosids</taxon>
        <taxon>malvids</taxon>
        <taxon>Brassicales</taxon>
        <taxon>Brassicaceae</taxon>
        <taxon>Camelineae</taxon>
        <taxon>Arabidopsis</taxon>
    </lineage>
</organism>
<protein>
    <recommendedName>
        <fullName>Membrane-anchored ubiquitin-fold protein 3</fullName>
        <shortName>AtMUB3</shortName>
        <shortName>Membrane-anchored ub-fold protein 3</shortName>
    </recommendedName>
    <alternativeName>
        <fullName>ATGP4</fullName>
    </alternativeName>
</protein>
<dbReference type="EMBL" id="U64921">
    <property type="protein sequence ID" value="AAD00115.1"/>
    <property type="molecule type" value="mRNA"/>
</dbReference>
<dbReference type="EMBL" id="AL035523">
    <property type="protein sequence ID" value="CAB36741.1"/>
    <property type="molecule type" value="Genomic_DNA"/>
</dbReference>
<dbReference type="EMBL" id="AL161562">
    <property type="protein sequence ID" value="CAB79408.1"/>
    <property type="molecule type" value="Genomic_DNA"/>
</dbReference>
<dbReference type="EMBL" id="CP002687">
    <property type="protein sequence ID" value="AEE84989.1"/>
    <property type="molecule type" value="Genomic_DNA"/>
</dbReference>
<dbReference type="EMBL" id="CP002687">
    <property type="protein sequence ID" value="ANM67200.1"/>
    <property type="molecule type" value="Genomic_DNA"/>
</dbReference>
<dbReference type="EMBL" id="BT003091">
    <property type="protein sequence ID" value="AAO23656.1"/>
    <property type="molecule type" value="mRNA"/>
</dbReference>
<dbReference type="EMBL" id="AK227315">
    <property type="protein sequence ID" value="BAE99330.1"/>
    <property type="molecule type" value="mRNA"/>
</dbReference>
<dbReference type="PIR" id="T05520">
    <property type="entry name" value="T05520"/>
</dbReference>
<dbReference type="RefSeq" id="NP_001329044.1">
    <property type="nucleotide sequence ID" value="NM_001341720.1"/>
</dbReference>
<dbReference type="RefSeq" id="NP_194229.1">
    <property type="nucleotide sequence ID" value="NM_118631.3"/>
</dbReference>
<dbReference type="PDB" id="4X57">
    <property type="method" value="X-ray"/>
    <property type="resolution" value="2.80 A"/>
    <property type="chains" value="B/D=1-118"/>
</dbReference>
<dbReference type="PDBsum" id="4X57"/>
<dbReference type="SMR" id="Q9SW27"/>
<dbReference type="BioGRID" id="13890">
    <property type="interactions" value="9"/>
</dbReference>
<dbReference type="FunCoup" id="Q9SW27">
    <property type="interactions" value="494"/>
</dbReference>
<dbReference type="IntAct" id="Q9SW27">
    <property type="interactions" value="2"/>
</dbReference>
<dbReference type="STRING" id="3702.Q9SW27"/>
<dbReference type="PaxDb" id="3702-AT4G24990.1"/>
<dbReference type="ProteomicsDB" id="238657"/>
<dbReference type="DNASU" id="828602"/>
<dbReference type="EnsemblPlants" id="AT4G24990.1">
    <property type="protein sequence ID" value="AT4G24990.1"/>
    <property type="gene ID" value="AT4G24990"/>
</dbReference>
<dbReference type="EnsemblPlants" id="AT4G24990.2">
    <property type="protein sequence ID" value="AT4G24990.2"/>
    <property type="gene ID" value="AT4G24990"/>
</dbReference>
<dbReference type="GeneID" id="828602"/>
<dbReference type="Gramene" id="AT4G24990.1">
    <property type="protein sequence ID" value="AT4G24990.1"/>
    <property type="gene ID" value="AT4G24990"/>
</dbReference>
<dbReference type="Gramene" id="AT4G24990.2">
    <property type="protein sequence ID" value="AT4G24990.2"/>
    <property type="gene ID" value="AT4G24990"/>
</dbReference>
<dbReference type="KEGG" id="ath:AT4G24990"/>
<dbReference type="Araport" id="AT4G24990"/>
<dbReference type="TAIR" id="AT4G24990">
    <property type="gene designation" value="ATGP4"/>
</dbReference>
<dbReference type="eggNOG" id="ENOG502RZEB">
    <property type="taxonomic scope" value="Eukaryota"/>
</dbReference>
<dbReference type="HOGENOM" id="CLU_136465_1_0_1"/>
<dbReference type="InParanoid" id="Q9SW27"/>
<dbReference type="OMA" id="MPKSANE"/>
<dbReference type="PhylomeDB" id="Q9SW27"/>
<dbReference type="EvolutionaryTrace" id="Q9SW27"/>
<dbReference type="PRO" id="PR:Q9SW27"/>
<dbReference type="Proteomes" id="UP000006548">
    <property type="component" value="Chromosome 4"/>
</dbReference>
<dbReference type="ExpressionAtlas" id="Q9SW27">
    <property type="expression patterns" value="baseline and differential"/>
</dbReference>
<dbReference type="GO" id="GO:0005886">
    <property type="term" value="C:plasma membrane"/>
    <property type="evidence" value="ECO:0007005"/>
    <property type="project" value="TAIR"/>
</dbReference>
<dbReference type="CDD" id="cd01814">
    <property type="entry name" value="Ubl_MUBs_plant"/>
    <property type="match status" value="1"/>
</dbReference>
<dbReference type="FunFam" id="3.10.20.90:FF:000361">
    <property type="entry name" value="Membrane-anchored ubiquitin-fold protein"/>
    <property type="match status" value="1"/>
</dbReference>
<dbReference type="Gene3D" id="3.10.20.90">
    <property type="entry name" value="Phosphatidylinositol 3-kinase Catalytic Subunit, Chain A, domain 1"/>
    <property type="match status" value="1"/>
</dbReference>
<dbReference type="InterPro" id="IPR017000">
    <property type="entry name" value="MUB"/>
</dbReference>
<dbReference type="InterPro" id="IPR000626">
    <property type="entry name" value="Ubiquitin-like_dom"/>
</dbReference>
<dbReference type="InterPro" id="IPR029071">
    <property type="entry name" value="Ubiquitin-like_domsf"/>
</dbReference>
<dbReference type="InterPro" id="IPR040015">
    <property type="entry name" value="UBL3-like"/>
</dbReference>
<dbReference type="InterPro" id="IPR039540">
    <property type="entry name" value="UBL3-like_ubiquitin_dom"/>
</dbReference>
<dbReference type="PANTHER" id="PTHR13169:SF3">
    <property type="entry name" value="MEMBRANE-ANCHORED UBIQUITIN-FOLD PROTEIN 3"/>
    <property type="match status" value="1"/>
</dbReference>
<dbReference type="PANTHER" id="PTHR13169">
    <property type="entry name" value="UBIQUITIN-LIKE PROTEIN 3 HCG-1 PROTEIN"/>
    <property type="match status" value="1"/>
</dbReference>
<dbReference type="Pfam" id="PF13881">
    <property type="entry name" value="Rad60-SLD_2"/>
    <property type="match status" value="1"/>
</dbReference>
<dbReference type="PIRSF" id="PIRSF032572">
    <property type="entry name" value="MUB"/>
    <property type="match status" value="1"/>
</dbReference>
<dbReference type="SUPFAM" id="SSF54236">
    <property type="entry name" value="Ubiquitin-like"/>
    <property type="match status" value="1"/>
</dbReference>
<dbReference type="PROSITE" id="PS50053">
    <property type="entry name" value="UBIQUITIN_2"/>
    <property type="match status" value="1"/>
</dbReference>
<gene>
    <name type="primary">MUB3</name>
    <name type="ordered locus">At4g24990</name>
    <name type="ORF">F13M23.130</name>
</gene>
<accession>Q9SW27</accession>
<accession>Q9ZRD4</accession>